<name>UBP12_HUMAN</name>
<protein>
    <recommendedName>
        <fullName evidence="20">Ubiquitin carboxyl-terminal hydrolase 12</fullName>
        <ecNumber evidence="5 7 18 19">3.4.19.12</ecNumber>
    </recommendedName>
    <alternativeName>
        <fullName>Deubiquitinating enzyme 12</fullName>
    </alternativeName>
    <alternativeName>
        <fullName evidence="21">Ubiquitin specific peptidase 12</fullName>
    </alternativeName>
    <alternativeName>
        <fullName>Ubiquitin thioesterase 12</fullName>
    </alternativeName>
    <alternativeName>
        <fullName>Ubiquitin-hydrolyzing enzyme 1</fullName>
    </alternativeName>
    <alternativeName>
        <fullName>Ubiquitin-specific-processing protease 12</fullName>
    </alternativeName>
</protein>
<feature type="chain" id="PRO_0000080634" description="Ubiquitin carboxyl-terminal hydrolase 12">
    <location>
        <begin position="1"/>
        <end position="370"/>
    </location>
</feature>
<feature type="domain" description="USP" evidence="3">
    <location>
        <begin position="39"/>
        <end position="369"/>
    </location>
</feature>
<feature type="region of interest" description="Disordered" evidence="4">
    <location>
        <begin position="145"/>
        <end position="169"/>
    </location>
</feature>
<feature type="short sequence motif" description="Required for plasma membrane localization of USP12/WDR20" evidence="15">
    <location>
        <begin position="1"/>
        <end position="4"/>
    </location>
</feature>
<feature type="compositionally biased region" description="Polar residues" evidence="4">
    <location>
        <begin position="157"/>
        <end position="168"/>
    </location>
</feature>
<feature type="active site" description="Nucleophile" evidence="3 11">
    <location>
        <position position="48"/>
    </location>
</feature>
<feature type="active site" description="Proton acceptor" evidence="3">
    <location>
        <position position="317"/>
    </location>
</feature>
<feature type="binding site" evidence="23 24 25 27">
    <location>
        <position position="186"/>
    </location>
    <ligand>
        <name>Zn(2+)</name>
        <dbReference type="ChEBI" id="CHEBI:29105"/>
    </ligand>
</feature>
<feature type="binding site" evidence="23 24 25 26 27">
    <location>
        <position position="189"/>
    </location>
    <ligand>
        <name>Zn(2+)</name>
        <dbReference type="ChEBI" id="CHEBI:29105"/>
    </ligand>
</feature>
<feature type="binding site" evidence="23 24 25 26 27">
    <location>
        <position position="233"/>
    </location>
    <ligand>
        <name>Zn(2+)</name>
        <dbReference type="ChEBI" id="CHEBI:29105"/>
    </ligand>
</feature>
<feature type="binding site" evidence="23 24 25 26 27">
    <location>
        <position position="236"/>
    </location>
    <ligand>
        <name>Zn(2+)</name>
        <dbReference type="ChEBI" id="CHEBI:29105"/>
    </ligand>
</feature>
<feature type="mutagenesis site" description="Abolishes catalytic activity. Retains the ability to protect against HTT/huntingtin-induced polyglutamine expansion-dependent toxicity." evidence="8 11 19">
    <original>C</original>
    <variation>A</variation>
    <location>
        <position position="48"/>
    </location>
</feature>
<feature type="mutagenesis site" description="Abolishes catalytic activity. Reduced deubiquitination of Notch. Retains the ability to protect against HTT/huntingtin-induced polyglutamine expansion-dependent toxicity." evidence="5 7 8 16">
    <original>C</original>
    <variation>S</variation>
    <location>
        <position position="48"/>
    </location>
</feature>
<feature type="mutagenesis site" description="Impaired binding to WDR48." evidence="12">
    <original>E</original>
    <variation>K</variation>
    <location>
        <position position="190"/>
    </location>
</feature>
<feature type="mutagenesis site" description="Loss of activity." evidence="11">
    <original>QNT</original>
    <variation>GGG</variation>
    <location>
        <begin position="208"/>
        <end position="210"/>
    </location>
</feature>
<feature type="mutagenesis site" description="Loss of activity." evidence="11">
    <original>F</original>
    <variation>A</variation>
    <location>
        <position position="219"/>
    </location>
</feature>
<feature type="mutagenesis site" description="Impaired binding to WDR48; when associated with A-241." evidence="11">
    <original>Q</original>
    <variation>A</variation>
    <location>
        <position position="240"/>
    </location>
</feature>
<feature type="mutagenesis site" description="Impaired binding to WDR48; when associated with A-240." evidence="11">
    <original>E</original>
    <variation>A</variation>
    <location>
        <position position="241"/>
    </location>
</feature>
<feature type="mutagenesis site" description="Strong reduction of activity." evidence="11">
    <original>Y</original>
    <variation>A</variation>
    <location>
        <position position="264"/>
    </location>
</feature>
<feature type="mutagenesis site" description="Impaired binding to WDR20; when associated with A-287. Impaired binding to DMWD; when associated with A-287. Does not promote relocation to the plasma membrane in presence of WDR20; when associated with A-287." evidence="11 15 17">
    <original>V</original>
    <variation>D</variation>
    <location>
        <position position="279"/>
    </location>
</feature>
<feature type="mutagenesis site" description="Impaired binding to WDR20; when associated with A-279. Impaired binding to DMWD; when associated with A-279. Does not promote relocation to the plasma membrane in presence of WDR20; when associated with A-279." evidence="11 15 17">
    <original>F</original>
    <variation>A</variation>
    <location>
        <position position="287"/>
    </location>
</feature>
<feature type="sequence conflict" description="In Ref. 5; AAH26072." evidence="20" ref="5">
    <original>H</original>
    <variation>D</variation>
    <location>
        <position position="173"/>
    </location>
</feature>
<feature type="helix" evidence="28">
    <location>
        <begin position="22"/>
        <end position="27"/>
    </location>
</feature>
<feature type="turn" evidence="28">
    <location>
        <begin position="29"/>
        <end position="31"/>
    </location>
</feature>
<feature type="strand" evidence="28">
    <location>
        <begin position="38"/>
        <end position="41"/>
    </location>
</feature>
<feature type="strand" evidence="29">
    <location>
        <begin position="42"/>
        <end position="46"/>
    </location>
</feature>
<feature type="helix" evidence="29">
    <location>
        <begin position="47"/>
        <end position="58"/>
    </location>
</feature>
<feature type="helix" evidence="29">
    <location>
        <begin position="61"/>
        <end position="68"/>
    </location>
</feature>
<feature type="helix" evidence="29">
    <location>
        <begin position="81"/>
        <end position="92"/>
    </location>
</feature>
<feature type="strand" evidence="28">
    <location>
        <begin position="95"/>
        <end position="101"/>
    </location>
</feature>
<feature type="helix" evidence="29">
    <location>
        <begin position="103"/>
        <end position="105"/>
    </location>
</feature>
<feature type="helix" evidence="29">
    <location>
        <begin position="107"/>
        <end position="109"/>
    </location>
</feature>
<feature type="helix" evidence="28">
    <location>
        <begin position="115"/>
        <end position="117"/>
    </location>
</feature>
<feature type="strand" evidence="28">
    <location>
        <begin position="119"/>
        <end position="121"/>
    </location>
</feature>
<feature type="helix" evidence="29">
    <location>
        <begin position="128"/>
        <end position="146"/>
    </location>
</feature>
<feature type="helix" evidence="29">
    <location>
        <begin position="171"/>
        <end position="176"/>
    </location>
</feature>
<feature type="strand" evidence="29">
    <location>
        <begin position="178"/>
        <end position="186"/>
    </location>
</feature>
<feature type="turn" evidence="29">
    <location>
        <begin position="187"/>
        <end position="189"/>
    </location>
</feature>
<feature type="strand" evidence="29">
    <location>
        <begin position="192"/>
        <end position="204"/>
    </location>
</feature>
<feature type="strand" evidence="28">
    <location>
        <begin position="208"/>
        <end position="211"/>
    </location>
</feature>
<feature type="helix" evidence="29">
    <location>
        <begin position="212"/>
        <end position="217"/>
    </location>
</feature>
<feature type="strand" evidence="29">
    <location>
        <begin position="220"/>
        <end position="225"/>
    </location>
</feature>
<feature type="helix" evidence="29">
    <location>
        <begin position="227"/>
        <end position="229"/>
    </location>
</feature>
<feature type="strand" evidence="29">
    <location>
        <begin position="231"/>
        <end position="233"/>
    </location>
</feature>
<feature type="turn" evidence="29">
    <location>
        <begin position="234"/>
        <end position="237"/>
    </location>
</feature>
<feature type="strand" evidence="29">
    <location>
        <begin position="238"/>
        <end position="240"/>
    </location>
</feature>
<feature type="strand" evidence="29">
    <location>
        <begin position="242"/>
        <end position="250"/>
    </location>
</feature>
<feature type="strand" evidence="29">
    <location>
        <begin position="253"/>
        <end position="259"/>
    </location>
</feature>
<feature type="strand" evidence="28">
    <location>
        <begin position="262"/>
        <end position="265"/>
    </location>
</feature>
<feature type="turn" evidence="28">
    <location>
        <begin position="266"/>
        <end position="269"/>
    </location>
</feature>
<feature type="strand" evidence="28">
    <location>
        <begin position="270"/>
        <end position="273"/>
    </location>
</feature>
<feature type="strand" evidence="29">
    <location>
        <begin position="282"/>
        <end position="285"/>
    </location>
</feature>
<feature type="strand" evidence="29">
    <location>
        <begin position="299"/>
        <end position="308"/>
    </location>
</feature>
<feature type="helix" evidence="29">
    <location>
        <begin position="312"/>
        <end position="314"/>
    </location>
</feature>
<feature type="strand" evidence="29">
    <location>
        <begin position="317"/>
        <end position="324"/>
    </location>
</feature>
<feature type="strand" evidence="29">
    <location>
        <begin position="327"/>
        <end position="332"/>
    </location>
</feature>
<feature type="strand" evidence="29">
    <location>
        <begin position="335"/>
        <end position="339"/>
    </location>
</feature>
<feature type="turn" evidence="29">
    <location>
        <begin position="341"/>
        <end position="343"/>
    </location>
</feature>
<feature type="helix" evidence="29">
    <location>
        <begin position="344"/>
        <end position="347"/>
    </location>
</feature>
<feature type="strand" evidence="30">
    <location>
        <begin position="350"/>
        <end position="352"/>
    </location>
</feature>
<feature type="strand" evidence="29">
    <location>
        <begin position="362"/>
        <end position="368"/>
    </location>
</feature>
<accession>O75317</accession>
<accession>A8K0X0</accession>
<accession>Q5VZV3</accession>
<accession>Q8TC49</accession>
<dbReference type="EC" id="3.4.19.12" evidence="5 7 18 19"/>
<dbReference type="EMBL" id="AF022789">
    <property type="protein sequence ID" value="AAC23551.1"/>
    <property type="status" value="ALT_INIT"/>
    <property type="molecule type" value="mRNA"/>
</dbReference>
<dbReference type="EMBL" id="AK289685">
    <property type="protein sequence ID" value="BAF82374.1"/>
    <property type="molecule type" value="mRNA"/>
</dbReference>
<dbReference type="EMBL" id="AL158062">
    <property type="status" value="NOT_ANNOTATED_CDS"/>
    <property type="molecule type" value="Genomic_DNA"/>
</dbReference>
<dbReference type="EMBL" id="AL355473">
    <property type="status" value="NOT_ANNOTATED_CDS"/>
    <property type="molecule type" value="Genomic_DNA"/>
</dbReference>
<dbReference type="EMBL" id="CH471075">
    <property type="protein sequence ID" value="EAX08392.1"/>
    <property type="molecule type" value="Genomic_DNA"/>
</dbReference>
<dbReference type="EMBL" id="BC026072">
    <property type="protein sequence ID" value="AAH26072.1"/>
    <property type="molecule type" value="mRNA"/>
</dbReference>
<dbReference type="CCDS" id="CCDS31952.1"/>
<dbReference type="RefSeq" id="NP_872294.2">
    <property type="nucleotide sequence ID" value="NM_182488.4"/>
</dbReference>
<dbReference type="PDB" id="5K16">
    <property type="method" value="X-ray"/>
    <property type="resolution" value="2.60 A"/>
    <property type="chains" value="A/B=16-370"/>
</dbReference>
<dbReference type="PDB" id="5K1A">
    <property type="method" value="X-ray"/>
    <property type="resolution" value="2.30 A"/>
    <property type="chains" value="A/C/E/G=40-370"/>
</dbReference>
<dbReference type="PDB" id="5K1B">
    <property type="method" value="X-ray"/>
    <property type="resolution" value="3.30 A"/>
    <property type="chains" value="A=4-370"/>
</dbReference>
<dbReference type="PDB" id="5K1C">
    <property type="method" value="X-ray"/>
    <property type="resolution" value="3.00 A"/>
    <property type="chains" value="A=16-370"/>
</dbReference>
<dbReference type="PDB" id="5L8W">
    <property type="method" value="X-ray"/>
    <property type="resolution" value="2.79 A"/>
    <property type="chains" value="A=1-370"/>
</dbReference>
<dbReference type="PDBsum" id="5K16"/>
<dbReference type="PDBsum" id="5K1A"/>
<dbReference type="PDBsum" id="5K1B"/>
<dbReference type="PDBsum" id="5K1C"/>
<dbReference type="PDBsum" id="5L8W"/>
<dbReference type="SMR" id="O75317"/>
<dbReference type="BioGRID" id="128522">
    <property type="interactions" value="82"/>
</dbReference>
<dbReference type="ComplexPortal" id="CPX-9361">
    <property type="entry name" value="USP12-WDR20 deubiquitinase complex"/>
</dbReference>
<dbReference type="ComplexPortal" id="CPX-9381">
    <property type="entry name" value="USP12-DMWD deubiquitinase complex"/>
</dbReference>
<dbReference type="CORUM" id="O75317"/>
<dbReference type="FunCoup" id="O75317">
    <property type="interactions" value="2716"/>
</dbReference>
<dbReference type="IntAct" id="O75317">
    <property type="interactions" value="39"/>
</dbReference>
<dbReference type="MINT" id="O75317"/>
<dbReference type="STRING" id="9606.ENSP00000282344"/>
<dbReference type="ChEMBL" id="CHEMBL5291973"/>
<dbReference type="MEROPS" id="C19.020"/>
<dbReference type="iPTMnet" id="O75317"/>
<dbReference type="PhosphoSitePlus" id="O75317"/>
<dbReference type="SwissPalm" id="O75317"/>
<dbReference type="BioMuta" id="USP12"/>
<dbReference type="jPOST" id="O75317"/>
<dbReference type="MassIVE" id="O75317"/>
<dbReference type="PaxDb" id="9606-ENSP00000282344"/>
<dbReference type="PeptideAtlas" id="O75317"/>
<dbReference type="ProteomicsDB" id="49890"/>
<dbReference type="Pumba" id="O75317"/>
<dbReference type="Antibodypedia" id="22631">
    <property type="antibodies" value="280 antibodies from 28 providers"/>
</dbReference>
<dbReference type="DNASU" id="219333"/>
<dbReference type="Ensembl" id="ENST00000282344.11">
    <property type="protein sequence ID" value="ENSP00000282344.6"/>
    <property type="gene ID" value="ENSG00000152484.14"/>
</dbReference>
<dbReference type="GeneID" id="219333"/>
<dbReference type="KEGG" id="hsa:219333"/>
<dbReference type="MANE-Select" id="ENST00000282344.11">
    <property type="protein sequence ID" value="ENSP00000282344.6"/>
    <property type="RefSeq nucleotide sequence ID" value="NM_182488.4"/>
    <property type="RefSeq protein sequence ID" value="NP_872294.2"/>
</dbReference>
<dbReference type="UCSC" id="uc001uqy.4">
    <property type="organism name" value="human"/>
</dbReference>
<dbReference type="AGR" id="HGNC:20485"/>
<dbReference type="CTD" id="219333"/>
<dbReference type="DisGeNET" id="219333"/>
<dbReference type="GeneCards" id="USP12"/>
<dbReference type="HGNC" id="HGNC:20485">
    <property type="gene designation" value="USP12"/>
</dbReference>
<dbReference type="HPA" id="ENSG00000152484">
    <property type="expression patterns" value="Low tissue specificity"/>
</dbReference>
<dbReference type="MIM" id="603091">
    <property type="type" value="gene"/>
</dbReference>
<dbReference type="neXtProt" id="NX_O75317"/>
<dbReference type="OpenTargets" id="ENSG00000152484"/>
<dbReference type="PharmGKB" id="PA37236"/>
<dbReference type="VEuPathDB" id="HostDB:ENSG00000152484"/>
<dbReference type="eggNOG" id="KOG1864">
    <property type="taxonomic scope" value="Eukaryota"/>
</dbReference>
<dbReference type="GeneTree" id="ENSGT00940000153284"/>
<dbReference type="HOGENOM" id="CLU_008279_2_0_1"/>
<dbReference type="InParanoid" id="O75317"/>
<dbReference type="OMA" id="KSHNFWL"/>
<dbReference type="OrthoDB" id="27652at2759"/>
<dbReference type="PAN-GO" id="O75317">
    <property type="GO annotations" value="5 GO annotations based on evolutionary models"/>
</dbReference>
<dbReference type="PhylomeDB" id="O75317"/>
<dbReference type="TreeFam" id="TF314144"/>
<dbReference type="PathwayCommons" id="O75317"/>
<dbReference type="Reactome" id="R-HSA-5689880">
    <property type="pathway name" value="Ub-specific processing proteases"/>
</dbReference>
<dbReference type="SignaLink" id="O75317"/>
<dbReference type="BioGRID-ORCS" id="219333">
    <property type="hits" value="43 hits in 1197 CRISPR screens"/>
</dbReference>
<dbReference type="ChiTaRS" id="USP12">
    <property type="organism name" value="human"/>
</dbReference>
<dbReference type="GenomeRNAi" id="219333"/>
<dbReference type="Pharos" id="O75317">
    <property type="development level" value="Tbio"/>
</dbReference>
<dbReference type="PRO" id="PR:O75317"/>
<dbReference type="Proteomes" id="UP000005640">
    <property type="component" value="Chromosome 13"/>
</dbReference>
<dbReference type="RNAct" id="O75317">
    <property type="molecule type" value="protein"/>
</dbReference>
<dbReference type="Bgee" id="ENSG00000152484">
    <property type="expression patterns" value="Expressed in endothelial cell and 196 other cell types or tissues"/>
</dbReference>
<dbReference type="ExpressionAtlas" id="O75317">
    <property type="expression patterns" value="baseline and differential"/>
</dbReference>
<dbReference type="GO" id="GO:0005737">
    <property type="term" value="C:cytoplasm"/>
    <property type="evidence" value="ECO:0000314"/>
    <property type="project" value="UniProtKB"/>
</dbReference>
<dbReference type="GO" id="GO:0005829">
    <property type="term" value="C:cytosol"/>
    <property type="evidence" value="ECO:0000318"/>
    <property type="project" value="GO_Central"/>
</dbReference>
<dbReference type="GO" id="GO:0005654">
    <property type="term" value="C:nucleoplasm"/>
    <property type="evidence" value="ECO:0000304"/>
    <property type="project" value="Reactome"/>
</dbReference>
<dbReference type="GO" id="GO:0005634">
    <property type="term" value="C:nucleus"/>
    <property type="evidence" value="ECO:0000314"/>
    <property type="project" value="UniProtKB"/>
</dbReference>
<dbReference type="GO" id="GO:0005886">
    <property type="term" value="C:plasma membrane"/>
    <property type="evidence" value="ECO:0000314"/>
    <property type="project" value="UniProtKB"/>
</dbReference>
<dbReference type="GO" id="GO:0004843">
    <property type="term" value="F:cysteine-type deubiquitinase activity"/>
    <property type="evidence" value="ECO:0000314"/>
    <property type="project" value="UniProtKB"/>
</dbReference>
<dbReference type="GO" id="GO:0004197">
    <property type="term" value="F:cysteine-type endopeptidase activity"/>
    <property type="evidence" value="ECO:0000315"/>
    <property type="project" value="UniProtKB"/>
</dbReference>
<dbReference type="GO" id="GO:0046872">
    <property type="term" value="F:metal ion binding"/>
    <property type="evidence" value="ECO:0007669"/>
    <property type="project" value="UniProtKB-KW"/>
</dbReference>
<dbReference type="GO" id="GO:0016579">
    <property type="term" value="P:protein deubiquitination"/>
    <property type="evidence" value="ECO:0000314"/>
    <property type="project" value="UniProtKB"/>
</dbReference>
<dbReference type="GO" id="GO:0006508">
    <property type="term" value="P:proteolysis"/>
    <property type="evidence" value="ECO:0007669"/>
    <property type="project" value="UniProtKB-KW"/>
</dbReference>
<dbReference type="GO" id="GO:0031647">
    <property type="term" value="P:regulation of protein stability"/>
    <property type="evidence" value="ECO:0000318"/>
    <property type="project" value="GO_Central"/>
</dbReference>
<dbReference type="CDD" id="cd02663">
    <property type="entry name" value="Peptidase_C19G"/>
    <property type="match status" value="1"/>
</dbReference>
<dbReference type="FunFam" id="3.90.70.10:FF:000003">
    <property type="entry name" value="Ubiquitin carboxyl-terminal hydrolase 46"/>
    <property type="match status" value="1"/>
</dbReference>
<dbReference type="Gene3D" id="3.90.70.10">
    <property type="entry name" value="Cysteine proteinases"/>
    <property type="match status" value="1"/>
</dbReference>
<dbReference type="InterPro" id="IPR038765">
    <property type="entry name" value="Papain-like_cys_pep_sf"/>
</dbReference>
<dbReference type="InterPro" id="IPR050164">
    <property type="entry name" value="Peptidase_C19"/>
</dbReference>
<dbReference type="InterPro" id="IPR001394">
    <property type="entry name" value="Peptidase_C19_UCH"/>
</dbReference>
<dbReference type="InterPro" id="IPR018200">
    <property type="entry name" value="USP_CS"/>
</dbReference>
<dbReference type="InterPro" id="IPR028889">
    <property type="entry name" value="USP_dom"/>
</dbReference>
<dbReference type="PANTHER" id="PTHR24006">
    <property type="entry name" value="UBIQUITIN CARBOXYL-TERMINAL HYDROLASE"/>
    <property type="match status" value="1"/>
</dbReference>
<dbReference type="PANTHER" id="PTHR24006:SF647">
    <property type="entry name" value="UBIQUITIN CARBOXYL-TERMINAL HYDROLASE 12"/>
    <property type="match status" value="1"/>
</dbReference>
<dbReference type="Pfam" id="PF00443">
    <property type="entry name" value="UCH"/>
    <property type="match status" value="1"/>
</dbReference>
<dbReference type="SUPFAM" id="SSF54001">
    <property type="entry name" value="Cysteine proteinases"/>
    <property type="match status" value="1"/>
</dbReference>
<dbReference type="PROSITE" id="PS00972">
    <property type="entry name" value="USP_1"/>
    <property type="match status" value="1"/>
</dbReference>
<dbReference type="PROSITE" id="PS00973">
    <property type="entry name" value="USP_2"/>
    <property type="match status" value="1"/>
</dbReference>
<dbReference type="PROSITE" id="PS50235">
    <property type="entry name" value="USP_3"/>
    <property type="match status" value="1"/>
</dbReference>
<reference key="1">
    <citation type="journal article" date="1998" name="Genomics">
        <title>An evolutionarily conserved gene on human chromosome 5q33-q34, UBH1, encodes a novel deubiquitinating enzyme.</title>
        <authorList>
            <person name="Hansen-Hagge T.E."/>
            <person name="Janssen J.W.G."/>
            <person name="Hameister H."/>
            <person name="Papa F.R."/>
            <person name="Zechner U."/>
            <person name="Seriu T."/>
            <person name="Jauch A."/>
            <person name="Becke D."/>
            <person name="Hochstrasser M."/>
            <person name="Bartram C.R."/>
        </authorList>
    </citation>
    <scope>NUCLEOTIDE SEQUENCE [MRNA]</scope>
</reference>
<reference key="2">
    <citation type="journal article" date="2004" name="Nat. Genet.">
        <title>Complete sequencing and characterization of 21,243 full-length human cDNAs.</title>
        <authorList>
            <person name="Ota T."/>
            <person name="Suzuki Y."/>
            <person name="Nishikawa T."/>
            <person name="Otsuki T."/>
            <person name="Sugiyama T."/>
            <person name="Irie R."/>
            <person name="Wakamatsu A."/>
            <person name="Hayashi K."/>
            <person name="Sato H."/>
            <person name="Nagai K."/>
            <person name="Kimura K."/>
            <person name="Makita H."/>
            <person name="Sekine M."/>
            <person name="Obayashi M."/>
            <person name="Nishi T."/>
            <person name="Shibahara T."/>
            <person name="Tanaka T."/>
            <person name="Ishii S."/>
            <person name="Yamamoto J."/>
            <person name="Saito K."/>
            <person name="Kawai Y."/>
            <person name="Isono Y."/>
            <person name="Nakamura Y."/>
            <person name="Nagahari K."/>
            <person name="Murakami K."/>
            <person name="Yasuda T."/>
            <person name="Iwayanagi T."/>
            <person name="Wagatsuma M."/>
            <person name="Shiratori A."/>
            <person name="Sudo H."/>
            <person name="Hosoiri T."/>
            <person name="Kaku Y."/>
            <person name="Kodaira H."/>
            <person name="Kondo H."/>
            <person name="Sugawara M."/>
            <person name="Takahashi M."/>
            <person name="Kanda K."/>
            <person name="Yokoi T."/>
            <person name="Furuya T."/>
            <person name="Kikkawa E."/>
            <person name="Omura Y."/>
            <person name="Abe K."/>
            <person name="Kamihara K."/>
            <person name="Katsuta N."/>
            <person name="Sato K."/>
            <person name="Tanikawa M."/>
            <person name="Yamazaki M."/>
            <person name="Ninomiya K."/>
            <person name="Ishibashi T."/>
            <person name="Yamashita H."/>
            <person name="Murakawa K."/>
            <person name="Fujimori K."/>
            <person name="Tanai H."/>
            <person name="Kimata M."/>
            <person name="Watanabe M."/>
            <person name="Hiraoka S."/>
            <person name="Chiba Y."/>
            <person name="Ishida S."/>
            <person name="Ono Y."/>
            <person name="Takiguchi S."/>
            <person name="Watanabe S."/>
            <person name="Yosida M."/>
            <person name="Hotuta T."/>
            <person name="Kusano J."/>
            <person name="Kanehori K."/>
            <person name="Takahashi-Fujii A."/>
            <person name="Hara H."/>
            <person name="Tanase T.-O."/>
            <person name="Nomura Y."/>
            <person name="Togiya S."/>
            <person name="Komai F."/>
            <person name="Hara R."/>
            <person name="Takeuchi K."/>
            <person name="Arita M."/>
            <person name="Imose N."/>
            <person name="Musashino K."/>
            <person name="Yuuki H."/>
            <person name="Oshima A."/>
            <person name="Sasaki N."/>
            <person name="Aotsuka S."/>
            <person name="Yoshikawa Y."/>
            <person name="Matsunawa H."/>
            <person name="Ichihara T."/>
            <person name="Shiohata N."/>
            <person name="Sano S."/>
            <person name="Moriya S."/>
            <person name="Momiyama H."/>
            <person name="Satoh N."/>
            <person name="Takami S."/>
            <person name="Terashima Y."/>
            <person name="Suzuki O."/>
            <person name="Nakagawa S."/>
            <person name="Senoh A."/>
            <person name="Mizoguchi H."/>
            <person name="Goto Y."/>
            <person name="Shimizu F."/>
            <person name="Wakebe H."/>
            <person name="Hishigaki H."/>
            <person name="Watanabe T."/>
            <person name="Sugiyama A."/>
            <person name="Takemoto M."/>
            <person name="Kawakami B."/>
            <person name="Yamazaki M."/>
            <person name="Watanabe K."/>
            <person name="Kumagai A."/>
            <person name="Itakura S."/>
            <person name="Fukuzumi Y."/>
            <person name="Fujimori Y."/>
            <person name="Komiyama M."/>
            <person name="Tashiro H."/>
            <person name="Tanigami A."/>
            <person name="Fujiwara T."/>
            <person name="Ono T."/>
            <person name="Yamada K."/>
            <person name="Fujii Y."/>
            <person name="Ozaki K."/>
            <person name="Hirao M."/>
            <person name="Ohmori Y."/>
            <person name="Kawabata A."/>
            <person name="Hikiji T."/>
            <person name="Kobatake N."/>
            <person name="Inagaki H."/>
            <person name="Ikema Y."/>
            <person name="Okamoto S."/>
            <person name="Okitani R."/>
            <person name="Kawakami T."/>
            <person name="Noguchi S."/>
            <person name="Itoh T."/>
            <person name="Shigeta K."/>
            <person name="Senba T."/>
            <person name="Matsumura K."/>
            <person name="Nakajima Y."/>
            <person name="Mizuno T."/>
            <person name="Morinaga M."/>
            <person name="Sasaki M."/>
            <person name="Togashi T."/>
            <person name="Oyama M."/>
            <person name="Hata H."/>
            <person name="Watanabe M."/>
            <person name="Komatsu T."/>
            <person name="Mizushima-Sugano J."/>
            <person name="Satoh T."/>
            <person name="Shirai Y."/>
            <person name="Takahashi Y."/>
            <person name="Nakagawa K."/>
            <person name="Okumura K."/>
            <person name="Nagase T."/>
            <person name="Nomura N."/>
            <person name="Kikuchi H."/>
            <person name="Masuho Y."/>
            <person name="Yamashita R."/>
            <person name="Nakai K."/>
            <person name="Yada T."/>
            <person name="Nakamura Y."/>
            <person name="Ohara O."/>
            <person name="Isogai T."/>
            <person name="Sugano S."/>
        </authorList>
    </citation>
    <scope>NUCLEOTIDE SEQUENCE [LARGE SCALE MRNA]</scope>
    <source>
        <tissue>Amygdala</tissue>
    </source>
</reference>
<reference key="3">
    <citation type="journal article" date="2004" name="Nature">
        <title>The DNA sequence and analysis of human chromosome 13.</title>
        <authorList>
            <person name="Dunham A."/>
            <person name="Matthews L.H."/>
            <person name="Burton J."/>
            <person name="Ashurst J.L."/>
            <person name="Howe K.L."/>
            <person name="Ashcroft K.J."/>
            <person name="Beare D.M."/>
            <person name="Burford D.C."/>
            <person name="Hunt S.E."/>
            <person name="Griffiths-Jones S."/>
            <person name="Jones M.C."/>
            <person name="Keenan S.J."/>
            <person name="Oliver K."/>
            <person name="Scott C.E."/>
            <person name="Ainscough R."/>
            <person name="Almeida J.P."/>
            <person name="Ambrose K.D."/>
            <person name="Andrews D.T."/>
            <person name="Ashwell R.I.S."/>
            <person name="Babbage A.K."/>
            <person name="Bagguley C.L."/>
            <person name="Bailey J."/>
            <person name="Bannerjee R."/>
            <person name="Barlow K.F."/>
            <person name="Bates K."/>
            <person name="Beasley H."/>
            <person name="Bird C.P."/>
            <person name="Bray-Allen S."/>
            <person name="Brown A.J."/>
            <person name="Brown J.Y."/>
            <person name="Burrill W."/>
            <person name="Carder C."/>
            <person name="Carter N.P."/>
            <person name="Chapman J.C."/>
            <person name="Clamp M.E."/>
            <person name="Clark S.Y."/>
            <person name="Clarke G."/>
            <person name="Clee C.M."/>
            <person name="Clegg S.C."/>
            <person name="Cobley V."/>
            <person name="Collins J.E."/>
            <person name="Corby N."/>
            <person name="Coville G.J."/>
            <person name="Deloukas P."/>
            <person name="Dhami P."/>
            <person name="Dunham I."/>
            <person name="Dunn M."/>
            <person name="Earthrowl M.E."/>
            <person name="Ellington A.G."/>
            <person name="Faulkner L."/>
            <person name="Frankish A.G."/>
            <person name="Frankland J."/>
            <person name="French L."/>
            <person name="Garner P."/>
            <person name="Garnett J."/>
            <person name="Gilbert J.G.R."/>
            <person name="Gilson C.J."/>
            <person name="Ghori J."/>
            <person name="Grafham D.V."/>
            <person name="Gribble S.M."/>
            <person name="Griffiths C."/>
            <person name="Hall R.E."/>
            <person name="Hammond S."/>
            <person name="Harley J.L."/>
            <person name="Hart E.A."/>
            <person name="Heath P.D."/>
            <person name="Howden P.J."/>
            <person name="Huckle E.J."/>
            <person name="Hunt P.J."/>
            <person name="Hunt A.R."/>
            <person name="Johnson C."/>
            <person name="Johnson D."/>
            <person name="Kay M."/>
            <person name="Kimberley A.M."/>
            <person name="King A."/>
            <person name="Laird G.K."/>
            <person name="Langford C.J."/>
            <person name="Lawlor S."/>
            <person name="Leongamornlert D.A."/>
            <person name="Lloyd D.M."/>
            <person name="Lloyd C."/>
            <person name="Loveland J.E."/>
            <person name="Lovell J."/>
            <person name="Martin S."/>
            <person name="Mashreghi-Mohammadi M."/>
            <person name="McLaren S.J."/>
            <person name="McMurray A."/>
            <person name="Milne S."/>
            <person name="Moore M.J.F."/>
            <person name="Nickerson T."/>
            <person name="Palmer S.A."/>
            <person name="Pearce A.V."/>
            <person name="Peck A.I."/>
            <person name="Pelan S."/>
            <person name="Phillimore B."/>
            <person name="Porter K.M."/>
            <person name="Rice C.M."/>
            <person name="Searle S."/>
            <person name="Sehra H.K."/>
            <person name="Shownkeen R."/>
            <person name="Skuce C.D."/>
            <person name="Smith M."/>
            <person name="Steward C.A."/>
            <person name="Sycamore N."/>
            <person name="Tester J."/>
            <person name="Thomas D.W."/>
            <person name="Tracey A."/>
            <person name="Tromans A."/>
            <person name="Tubby B."/>
            <person name="Wall M."/>
            <person name="Wallis J.M."/>
            <person name="West A.P."/>
            <person name="Whitehead S.L."/>
            <person name="Willey D.L."/>
            <person name="Wilming L."/>
            <person name="Wray P.W."/>
            <person name="Wright M.W."/>
            <person name="Young L."/>
            <person name="Coulson A."/>
            <person name="Durbin R.M."/>
            <person name="Hubbard T."/>
            <person name="Sulston J.E."/>
            <person name="Beck S."/>
            <person name="Bentley D.R."/>
            <person name="Rogers J."/>
            <person name="Ross M.T."/>
        </authorList>
    </citation>
    <scope>NUCLEOTIDE SEQUENCE [LARGE SCALE GENOMIC DNA]</scope>
</reference>
<reference key="4">
    <citation type="submission" date="2005-07" db="EMBL/GenBank/DDBJ databases">
        <authorList>
            <person name="Mural R.J."/>
            <person name="Istrail S."/>
            <person name="Sutton G.G."/>
            <person name="Florea L."/>
            <person name="Halpern A.L."/>
            <person name="Mobarry C.M."/>
            <person name="Lippert R."/>
            <person name="Walenz B."/>
            <person name="Shatkay H."/>
            <person name="Dew I."/>
            <person name="Miller J.R."/>
            <person name="Flanigan M.J."/>
            <person name="Edwards N.J."/>
            <person name="Bolanos R."/>
            <person name="Fasulo D."/>
            <person name="Halldorsson B.V."/>
            <person name="Hannenhalli S."/>
            <person name="Turner R."/>
            <person name="Yooseph S."/>
            <person name="Lu F."/>
            <person name="Nusskern D.R."/>
            <person name="Shue B.C."/>
            <person name="Zheng X.H."/>
            <person name="Zhong F."/>
            <person name="Delcher A.L."/>
            <person name="Huson D.H."/>
            <person name="Kravitz S.A."/>
            <person name="Mouchard L."/>
            <person name="Reinert K."/>
            <person name="Remington K.A."/>
            <person name="Clark A.G."/>
            <person name="Waterman M.S."/>
            <person name="Eichler E.E."/>
            <person name="Adams M.D."/>
            <person name="Hunkapiller M.W."/>
            <person name="Myers E.W."/>
            <person name="Venter J.C."/>
        </authorList>
    </citation>
    <scope>NUCLEOTIDE SEQUENCE [LARGE SCALE GENOMIC DNA]</scope>
</reference>
<reference key="5">
    <citation type="journal article" date="2004" name="Genome Res.">
        <title>The status, quality, and expansion of the NIH full-length cDNA project: the Mammalian Gene Collection (MGC).</title>
        <authorList>
            <consortium name="The MGC Project Team"/>
        </authorList>
    </citation>
    <scope>NUCLEOTIDE SEQUENCE [LARGE SCALE MRNA]</scope>
    <source>
        <tissue>Testis</tissue>
    </source>
</reference>
<reference key="6">
    <citation type="journal article" date="2009" name="J. Biol. Chem.">
        <title>UAF1 is a subunit of multiple deubiquitinating enzyme complexes.</title>
        <authorList>
            <person name="Cohn M.A."/>
            <person name="Kee Y."/>
            <person name="Haas W."/>
            <person name="Gygi S.P."/>
            <person name="D'Andrea A.D."/>
        </authorList>
    </citation>
    <scope>IDENTIFICATION BY MASS SPECTROMETRY</scope>
    <scope>CATALYTIC ACTIVITY</scope>
    <scope>FUNCTION</scope>
    <scope>INTERACTION WITH WDR48</scope>
    <scope>MUTAGENESIS OF CYS-48</scope>
</reference>
<reference key="7">
    <citation type="journal article" date="2010" name="J. Biol. Chem.">
        <title>WDR20 regulates activity of the USP12 x UAF1 deubiquitinating enzyme complex.</title>
        <authorList>
            <person name="Kee Y."/>
            <person name="Yang K."/>
            <person name="Cohn M.A."/>
            <person name="Haas W."/>
            <person name="Gygi S.P."/>
            <person name="D'Andrea A.D."/>
        </authorList>
    </citation>
    <scope>SUBUNIT</scope>
    <scope>ACTIVITY REGULATION</scope>
    <scope>INTERACTION WITH WDR20</scope>
</reference>
<reference key="8">
    <citation type="journal article" date="2012" name="J. Biol. Chem.">
        <title>The ubiquitin-specific protease 12 (USP12) is a negative regulator of notch signaling acting on notch receptor trafficking toward degradation.</title>
        <authorList>
            <person name="Moretti J."/>
            <person name="Chastagner P."/>
            <person name="Liang C.C."/>
            <person name="Cohn M.A."/>
            <person name="Israel A."/>
            <person name="Brou C."/>
        </authorList>
    </citation>
    <scope>FUNCTION</scope>
    <scope>CATALYTIC ACTIVITY</scope>
    <scope>INTERACTION WITH ITCH AND WDR48</scope>
    <scope>MUTAGENESIS OF CYS-48</scope>
</reference>
<reference key="9">
    <citation type="journal article" date="2013" name="J. Biol. Chem.">
        <title>WD repeat protein WDR48 in complex with deubiquitinase USP12 suppresses Akt-dependent cell survival signaling by stabilizing PH domain leucine-rich repeat protein phosphatase 1 (PHLPP1).</title>
        <authorList>
            <person name="Gangula N.R."/>
            <person name="Maddika S."/>
        </authorList>
    </citation>
    <scope>FUNCTION</scope>
    <scope>INTERACTION WITH PHLPP1</scope>
</reference>
<reference key="10">
    <citation type="journal article" date="2015" name="PLoS Pathog.">
        <title>The EBNA3 family of Epstein-Barr virus nuclear proteins associates with the USP46/USP12 deubiquitination complexes to regulate lymphoblastoid cell line growth.</title>
        <authorList>
            <person name="Ohashi M."/>
            <person name="Holthaus A.M."/>
            <person name="Calderwood M.A."/>
            <person name="Lai C.Y."/>
            <person name="Krastins B."/>
            <person name="Sarracino D."/>
            <person name="Johannsen E."/>
        </authorList>
    </citation>
    <scope>INTERACTION WITH EPSTEIN-BARR VIRUS PROTEINS EBNA3 (MICROBIAL INFECTION)</scope>
    <scope>FUNCTION (MICROBIAL INFECTION)</scope>
    <scope>INTERACTION WITH RBPJ</scope>
</reference>
<reference key="11">
    <citation type="journal article" date="2016" name="Proc. Natl. Acad. Sci. U.S.A.">
        <title>Usp12 stabilizes the T-cell receptor complex at the cell surface during signaling.</title>
        <authorList>
            <person name="Jahan A.S."/>
            <person name="Lestra M."/>
            <person name="Swee L.K."/>
            <person name="Fan Y."/>
            <person name="Lamers M.M."/>
            <person name="Tafesse F.G."/>
            <person name="Theile C.S."/>
            <person name="Spooner E."/>
            <person name="Bruzzone R."/>
            <person name="Ploegh H.L."/>
            <person name="Sanyal S."/>
        </authorList>
    </citation>
    <scope>FUNCTION</scope>
    <scope>SUBCELLULAR LOCATION</scope>
</reference>
<reference key="12">
    <citation type="journal article" date="2017" name="Biochem. Biophys. Res. Commun.">
        <title>Deubiquitinase USP12 promotes LPS induced macrophage responses through inhibition of IkappaBalpha.</title>
        <authorList>
            <person name="Nayak T.K.S."/>
            <person name="Alamuru-Yellapragada N.P."/>
            <person name="Parsa K.V.L."/>
        </authorList>
    </citation>
    <scope>FUNCTION</scope>
    <scope>INDUCTION BY LPS</scope>
</reference>
<reference key="13">
    <citation type="journal article" date="2018" name="Nat. Commun.">
        <title>Deubiquitinase Usp12 functions noncatalytically to induce autophagy and confer neuroprotection in models of Huntington's disease.</title>
        <authorList>
            <person name="Aron R."/>
            <person name="Pellegrini P."/>
            <person name="Green E.W."/>
            <person name="Maddison D.C."/>
            <person name="Opoku-Nsiah K."/>
            <person name="Oliveira A.O."/>
            <person name="Wong J.S."/>
            <person name="Daub A.C."/>
            <person name="Giorgini F."/>
            <person name="Muchowski P."/>
            <person name="Finkbeiner S."/>
        </authorList>
    </citation>
    <scope>FUNCTION</scope>
    <scope>INTERACTION WITH OPTN AND SQSTM1</scope>
    <scope>MUTAGENESIS OF CYS-48</scope>
</reference>
<reference key="14">
    <citation type="journal article" date="2019" name="Eur. J. Cell Biol.">
        <title>WDR20 regulates shuttling of the USP12 deubiquitinase complex between the plasma membrane, cytoplasm and nucleus.</title>
        <authorList>
            <person name="Olazabal-Herrero A."/>
            <person name="Sendino M."/>
            <person name="Arganda-Carreras I."/>
            <person name="Rodriguez J.A."/>
        </authorList>
    </citation>
    <scope>SUBCELLULAR LOCATION</scope>
    <scope>INTERACTION WITH WDR20</scope>
    <scope>MUTAGENESIS OF VAL-279 AND PHE-287</scope>
</reference>
<reference key="15">
    <citation type="journal article" date="2021" name="FEBS J.">
        <title>The dystrophia myotonica WD repeat-containing protein DMWD and WDR20 differentially regulate USP12 deubiquitinase.</title>
        <authorList>
            <person name="Olazabal-Herrero A."/>
            <person name="Bilbao-Arribas M."/>
            <person name="Carlevaris O."/>
            <person name="Sendino M."/>
            <person name="Varela-Martinez E."/>
            <person name="Jugo B.M."/>
            <person name="Berra E."/>
            <person name="Rodriguez J.A."/>
        </authorList>
    </citation>
    <scope>SUBUNIT</scope>
    <scope>SUBCELLULAR LOCATION</scope>
    <scope>MUTAGENESIS OF VAL-279 AND PHE-287</scope>
</reference>
<reference key="16">
    <citation type="journal article" date="2020" name="PLoS Pathog.">
        <title>USP12 translocation maintains interferon antiviral efficacy by inhibiting CBP acetyltransferase activity.</title>
        <authorList>
            <person name="Liu J."/>
            <person name="Jin L."/>
            <person name="Chen X."/>
            <person name="Yuan Y."/>
            <person name="Zuo Y."/>
            <person name="Miao Y."/>
            <person name="Feng Q."/>
            <person name="Zhang H."/>
            <person name="Huang F."/>
            <person name="Guo T."/>
            <person name="Zhang L."/>
            <person name="Zhu L."/>
            <person name="Qian F."/>
            <person name="Zhu C."/>
            <person name="Zheng H."/>
        </authorList>
    </citation>
    <scope>FUNCTION</scope>
    <scope>INTERACTION WITH CREBBP</scope>
    <scope>SUBCELLULAR LOCATION</scope>
    <scope>MUTAGENESIS OF CYS-48</scope>
</reference>
<reference key="17">
    <citation type="journal article" date="2022" name="Int. J. Mol. Sci.">
        <title>Deubiquitinating Enzyme USP12 Regulates the Pro-Apoptosis Protein Bax.</title>
        <authorList>
            <person name="Choi H.S."/>
            <person name="Lim E.S."/>
            <person name="Baek K.H."/>
        </authorList>
    </citation>
    <scope>FUNCTION</scope>
    <scope>CATALYTIC ACTIVITY</scope>
</reference>
<reference key="18">
    <citation type="journal article" date="2023" name="PLoS Pathog.">
        <title>USP12 promotes antiviral responses by deubiquitinating and stabilizing IFI16.</title>
        <authorList>
            <person name="Fu Y."/>
            <person name="Zhan X."/>
            <person name="You X."/>
            <person name="Nie D."/>
            <person name="Mai H."/>
            <person name="Chen Y."/>
            <person name="He S."/>
            <person name="Sheng J."/>
            <person name="Zeng Z."/>
            <person name="Li H."/>
            <person name="Li J."/>
            <person name="Hu S."/>
        </authorList>
    </citation>
    <scope>FUNCTION</scope>
    <scope>MUTAGENESIS OF CYS-48</scope>
    <scope>CATALYTIC ACTIVITY</scope>
</reference>
<reference evidence="27" key="19">
    <citation type="journal article" date="2016" name="J. Struct. Biol.">
        <title>A conserved two-step binding for the UAF1 regulator to the USP12 deubiquitinating enzyme.</title>
        <authorList>
            <person name="Dharadhar S."/>
            <person name="Clerici M."/>
            <person name="van Dijk W.J."/>
            <person name="Fish A."/>
            <person name="Sixma T.K."/>
        </authorList>
    </citation>
    <scope>X-RAY CRYSTALLOGRAPHY (2.79 ANGSTROMS) IN COMPLEX WITH WDR48 AND UBIQUITIN</scope>
    <scope>ZINC-BINDING</scope>
    <scope>INTERACTION WITH WDR48</scope>
    <scope>MUTAGENESIS OF GLU-190</scope>
</reference>
<reference evidence="23 24 25 26" key="20">
    <citation type="journal article" date="2016" name="Mol. Cell">
        <title>Allosteric activation of ubiquitin-specific proteases by beta-propeller proteins UAF1 and WDR20.</title>
        <authorList>
            <person name="Li H."/>
            <person name="Lim K.S."/>
            <person name="Kim H."/>
            <person name="Hinds T.R."/>
            <person name="Jo U."/>
            <person name="Mao H."/>
            <person name="Weller C.E."/>
            <person name="Sun J."/>
            <person name="Chatterjee C."/>
            <person name="D'Andrea A.D."/>
            <person name="Zheng N."/>
        </authorList>
    </citation>
    <scope>X-RAY CRYSTALLOGRAPHY (2.30 ANGSTROMS) OF 40-370 IN COMPLEX WITH WDR20 AND WDR48</scope>
    <scope>FUNCTION</scope>
    <scope>ACTIVITY REGULATION</scope>
    <scope>INTERACTION WITH WRD20 AND WRD48</scope>
    <scope>ZINC-BINDING</scope>
    <scope>ACTIVE SITE</scope>
    <scope>MUTAGENESIS OF CYS-48; 208-GLN--THR-210; PHE-219; GLN-240; GLU-241; TYR-264; VAL-279 AND PHE-287</scope>
</reference>
<organism evidence="22">
    <name type="scientific">Homo sapiens</name>
    <name type="common">Human</name>
    <dbReference type="NCBI Taxonomy" id="9606"/>
    <lineage>
        <taxon>Eukaryota</taxon>
        <taxon>Metazoa</taxon>
        <taxon>Chordata</taxon>
        <taxon>Craniata</taxon>
        <taxon>Vertebrata</taxon>
        <taxon>Euteleostomi</taxon>
        <taxon>Mammalia</taxon>
        <taxon>Eutheria</taxon>
        <taxon>Euarchontoglires</taxon>
        <taxon>Primates</taxon>
        <taxon>Haplorrhini</taxon>
        <taxon>Catarrhini</taxon>
        <taxon>Hominidae</taxon>
        <taxon>Homo</taxon>
    </lineage>
</organism>
<evidence type="ECO:0000250" key="1">
    <source>
        <dbReference type="UniProtKB" id="D0RB01"/>
    </source>
</evidence>
<evidence type="ECO:0000250" key="2">
    <source>
        <dbReference type="UniProtKB" id="Q9D9M2"/>
    </source>
</evidence>
<evidence type="ECO:0000255" key="3">
    <source>
        <dbReference type="PROSITE-ProRule" id="PRU01035"/>
    </source>
</evidence>
<evidence type="ECO:0000256" key="4">
    <source>
        <dbReference type="SAM" id="MobiDB-lite"/>
    </source>
</evidence>
<evidence type="ECO:0000269" key="5">
    <source>
    </source>
</evidence>
<evidence type="ECO:0000269" key="6">
    <source>
    </source>
</evidence>
<evidence type="ECO:0000269" key="7">
    <source>
    </source>
</evidence>
<evidence type="ECO:0000269" key="8">
    <source>
    </source>
</evidence>
<evidence type="ECO:0000269" key="9">
    <source>
    </source>
</evidence>
<evidence type="ECO:0000269" key="10">
    <source>
    </source>
</evidence>
<evidence type="ECO:0000269" key="11">
    <source>
    </source>
</evidence>
<evidence type="ECO:0000269" key="12">
    <source>
    </source>
</evidence>
<evidence type="ECO:0000269" key="13">
    <source>
    </source>
</evidence>
<evidence type="ECO:0000269" key="14">
    <source>
    </source>
</evidence>
<evidence type="ECO:0000269" key="15">
    <source>
    </source>
</evidence>
<evidence type="ECO:0000269" key="16">
    <source>
    </source>
</evidence>
<evidence type="ECO:0000269" key="17">
    <source>
    </source>
</evidence>
<evidence type="ECO:0000269" key="18">
    <source>
    </source>
</evidence>
<evidence type="ECO:0000269" key="19">
    <source>
    </source>
</evidence>
<evidence type="ECO:0000305" key="20"/>
<evidence type="ECO:0000312" key="21">
    <source>
        <dbReference type="HGNC" id="HGNC:20485"/>
    </source>
</evidence>
<evidence type="ECO:0000312" key="22">
    <source>
        <dbReference type="Proteomes" id="UP000005640"/>
    </source>
</evidence>
<evidence type="ECO:0007744" key="23">
    <source>
        <dbReference type="PDB" id="5K16"/>
    </source>
</evidence>
<evidence type="ECO:0007744" key="24">
    <source>
        <dbReference type="PDB" id="5K1A"/>
    </source>
</evidence>
<evidence type="ECO:0007744" key="25">
    <source>
        <dbReference type="PDB" id="5K1B"/>
    </source>
</evidence>
<evidence type="ECO:0007744" key="26">
    <source>
        <dbReference type="PDB" id="5K1C"/>
    </source>
</evidence>
<evidence type="ECO:0007744" key="27">
    <source>
        <dbReference type="PDB" id="5L8W"/>
    </source>
</evidence>
<evidence type="ECO:0007829" key="28">
    <source>
        <dbReference type="PDB" id="5K16"/>
    </source>
</evidence>
<evidence type="ECO:0007829" key="29">
    <source>
        <dbReference type="PDB" id="5K1A"/>
    </source>
</evidence>
<evidence type="ECO:0007829" key="30">
    <source>
        <dbReference type="PDB" id="5L8W"/>
    </source>
</evidence>
<gene>
    <name type="primary">USP12</name>
    <name type="synonym">UBH1</name>
    <name type="synonym">USP12L1</name>
</gene>
<proteinExistence type="evidence at protein level"/>
<keyword id="KW-0002">3D-structure</keyword>
<keyword id="KW-1003">Cell membrane</keyword>
<keyword id="KW-0963">Cytoplasm</keyword>
<keyword id="KW-0378">Hydrolase</keyword>
<keyword id="KW-0472">Membrane</keyword>
<keyword id="KW-0479">Metal-binding</keyword>
<keyword id="KW-0539">Nucleus</keyword>
<keyword id="KW-0645">Protease</keyword>
<keyword id="KW-1267">Proteomics identification</keyword>
<keyword id="KW-1185">Reference proteome</keyword>
<keyword id="KW-0788">Thiol protease</keyword>
<keyword id="KW-0833">Ubl conjugation pathway</keyword>
<keyword id="KW-0862">Zinc</keyword>
<comment type="function">
    <text evidence="1 2 5 7 8 10 11 13 14 16 18 19">Deubiquitinating enzyme that plays various roles in the regulation of the immune response and inflammation (PubMed:19075014, PubMed:27373336). During TCR engagement and activation, translocates into the cytoplasm and deubiquitinates its substrates LAT and TRAT1 and prevents their lysosome-dependent degradation to stabilize the TCR signaling complex at the plasma membrane (PubMed:26811477). Plays an essential role in the selective LPS-induced macrophage response through the activation of NF-kappa-B pathway (PubMed:28063927). In addition, promotes that antiviral immune response through targeting DNA sensor IFI16 to inhibit its proteasome-dependent degradation (PubMed:37410794). Participates in the interferon signaling pathway and antiviral response independently of its deubiquitinase activity by maintaining nuclear phosphorylated STAT1 levels via inhibition of its CREBBP-mediated acetylation and subsequent dephosphorylation (PubMed:31899788). Plays an intrinsic role in promoting the differentiation, activation and proliferation of CD4(+) T-cell by activating the NF-kappa-B signaling pathway through deubiquitinating and stabilizing B-cell lymphoma/leukemia 10/BCL10 (By similarity). In myeloid-derived suppressor cells promotes the activation of the NF-kappa-B via deubiquitination and stabilization of RELA (By similarity). Regulates the 'Lys-63'-linked polyubiquitin chains of BAX and thereby modulates the mitochondrial apoptotic process (PubMed:36361894). Negative regulator of NOTCH signaling that specifically deubiquitinates non-activated NOTCH receptors to target them for lysosomal degradation; deubiquitination of NOTCH stimulates its transport form late endosomes to lysosomes (PubMed:22778262). Protects neurons against HTT/huntingtin-induced polyglutamine expansion-dependent neurodegeneration through regulation of autophagic flux (PubMed:30266909). This function is independent of deubiquitinase activity or of other components of the USP12-WDR20-WDR48 deubiquitinating complex (By similarity). In complex with WDR48, acts as a potential tumor suppressor by positively regulating PHLPP1 stability (PubMed:24145035).</text>
</comment>
<comment type="function">
    <text evidence="9">(Microbial infection) Forms a complex with Epstein-Barr virus protein EBNA3 which is an active deubiquitinase activity that may select specific substrates to promote B-lymphocyte transformation.</text>
</comment>
<comment type="catalytic activity">
    <reaction evidence="5 7 18">
        <text>Thiol-dependent hydrolysis of ester, thioester, amide, peptide and isopeptide bonds formed by the C-terminal Gly of ubiquitin (a 76-residue protein attached to proteins as an intracellular targeting signal).</text>
        <dbReference type="EC" id="3.4.19.12"/>
    </reaction>
</comment>
<comment type="activity regulation">
    <text evidence="6 11 17">Activated by interaction with WDR20, WDR48 and DMWD through different allosteric mechanisms.</text>
</comment>
<comment type="subunit">
    <text evidence="5 6 7 8 9 11 12 14 15 16 17">Interacts with WDR48 (PubMed:19075014, PubMed:27373336, PubMed:27650958). Interacts with WDR20; this interaction promotes translocation of the USP12 complex to the plasma membrane (PubMed:20147737, PubMed:27373336, PubMed:30466959). Component of the USP12-WDR20-WDR48 deubiquitinating complex (PubMed:20147737, PubMed:27373336). Component of the USP12-DMWD-WDR48 deubiquitinating complex (PubMed:33844468). Interacts with PHLPP1 (PubMed:24145035). Interacts with RBPJ (PubMed:25855980). Interacts with CBP; this interaction blocks the acetyltransferase activity of CREBBP (PubMed:31899788). Interacts with ITCH; the interaction is more efficient when both USP12 and WDR48/UAF1 are involved and may mediate recruitment of the USP12 deubiquitinating complex to Notch (PubMed:22778262). Interacts with OPTN and SQSTM1/p62; the interaction is independent of deubiquitinase activity and may be involved in regulation of autophagic flux (PubMed:30266909).</text>
</comment>
<comment type="subunit">
    <text evidence="9">(Microbial infection) Interacts with Epstein-Barr virus protein EBNA3.</text>
</comment>
<comment type="interaction">
    <interactant intactId="EBI-2511507">
        <id>O75317</id>
    </interactant>
    <interactant intactId="EBI-1049597">
        <id>P27797</id>
        <label>CALR</label>
    </interactant>
    <organismsDiffer>false</organismsDiffer>
    <experiments>3</experiments>
</comment>
<comment type="interaction">
    <interactant intactId="EBI-2511507">
        <id>O75317</id>
    </interactant>
    <interactant intactId="EBI-351007">
        <id>P36957</id>
        <label>DLST</label>
    </interactant>
    <organismsDiffer>false</organismsDiffer>
    <experiments>3</experiments>
</comment>
<comment type="interaction">
    <interactant intactId="EBI-2511507">
        <id>O75317</id>
    </interactant>
    <interactant intactId="EBI-1055945">
        <id>Q8TDX7</id>
        <label>NEK7</label>
    </interactant>
    <organismsDiffer>false</organismsDiffer>
    <experiments>3</experiments>
</comment>
<comment type="interaction">
    <interactant intactId="EBI-2511507">
        <id>O75317</id>
    </interactant>
    <interactant intactId="EBI-2511486">
        <id>Q8TBZ3</id>
        <label>WDR20</label>
    </interactant>
    <organismsDiffer>false</organismsDiffer>
    <experiments>6</experiments>
</comment>
<comment type="subcellular location">
    <subcellularLocation>
        <location evidence="10 15">Nucleus</location>
    </subcellularLocation>
    <subcellularLocation>
        <location evidence="10 15">Cytoplasm</location>
    </subcellularLocation>
    <subcellularLocation>
        <location evidence="15">Cell membrane</location>
    </subcellularLocation>
    <text evidence="10 15 16">Translocates from the nucleus to the cytosol on TCR stimulation, while it translocates into the nucleus in IFN signaling. USP12/WDR20/WDR48 complex is localized mainly to the plasma membrane (PubMed:30466959).</text>
</comment>
<comment type="induction">
    <text evidence="13">By LPS in stimulated macrophages.</text>
</comment>
<comment type="miscellaneous">
    <text evidence="8">Knockdown of USP12 increases Akt activation.</text>
</comment>
<comment type="similarity">
    <text evidence="20">Belongs to the peptidase C19 family. USP12/USP46 subfamily.</text>
</comment>
<comment type="sequence caution" evidence="20">
    <conflict type="erroneous initiation">
        <sequence resource="EMBL-CDS" id="AAC23551"/>
    </conflict>
</comment>
<sequence length="370" mass="42858">MEILMTVSKFASICTMGANASALEKEIGPEQFPVNEHYFGLVNFGNTCYCNSVLQALYFCRPFREKVLAYKSQPRKKESLLTCLADLFHSIATQKKKVGVIPPKKFITRLRKENELFDNYMQQDAHEFLNYLLNTIADILQEERKQEKQNGRLPNGNIDNENNNSTPDPTWVHEIFQGTLTNETRCLTCETISSKDEDFLDLSVDVEQNTSITHCLRGFSNTETLCSEYKYYCEECRSKQEAHKRMKVKKLPMILALHLKRFKYMDQLHRYTKLSYRVVFPLELRLFNTSGDATNPDRMYDLVAVVVHCGSGPNRGHYIAIVKSHDFWLLFDDDIVEKIDAQAIEEFYGLTSDISKNSESGYILFYQSRD</sequence>